<gene>
    <name evidence="5" type="primary">CENH3</name>
    <name evidence="11" type="ordered locus">Os05g0489800</name>
    <name evidence="6" type="ordered locus">LOC_Os05g41080</name>
    <name evidence="10" type="ORF">OJ1119_H02.19</name>
    <name evidence="12" type="ORF">OsJ_19013</name>
</gene>
<comment type="function">
    <text evidence="3 4 7 8">Histone H3-like variant which exclusively replaces conventional H3 in the nucleosome core of centromeric chromatin at the inner plate of the kinetochore (PubMed:14716315, PubMed:16877494). Required for recruitment and assembly of kinetochore proteins, mitotic progression and chromosome segregation (Probable).</text>
</comment>
<comment type="subcellular location">
    <subcellularLocation>
        <location evidence="3 4">Chromosome</location>
        <location evidence="3 4">Centromere</location>
        <location evidence="3 4">Kinetochore</location>
    </subcellularLocation>
    <text evidence="3 4">Localizes in the kinetochore domain of centromeres.</text>
</comment>
<comment type="similarity">
    <text evidence="6">Belongs to the histone H3 family.</text>
</comment>
<name>CENH3_ORYSJ</name>
<proteinExistence type="evidence at transcript level"/>
<protein>
    <recommendedName>
        <fullName evidence="5">Histone H3-like centromeric protein CENH3</fullName>
    </recommendedName>
    <alternativeName>
        <fullName evidence="6">Centromeric histone CENH3</fullName>
    </alternativeName>
    <alternativeName>
        <fullName evidence="6">Centromeric histone H3</fullName>
    </alternativeName>
</protein>
<dbReference type="EMBL" id="AY438639">
    <property type="protein sequence ID" value="AAR85315.1"/>
    <property type="molecule type" value="mRNA"/>
</dbReference>
<dbReference type="EMBL" id="AC097175">
    <property type="protein sequence ID" value="AAT77291.1"/>
    <property type="molecule type" value="Genomic_DNA"/>
</dbReference>
<dbReference type="EMBL" id="AP008211">
    <property type="protein sequence ID" value="BAF17808.1"/>
    <property type="molecule type" value="Genomic_DNA"/>
</dbReference>
<dbReference type="EMBL" id="AP014961">
    <property type="protein sequence ID" value="BAS94646.1"/>
    <property type="molecule type" value="Genomic_DNA"/>
</dbReference>
<dbReference type="EMBL" id="CM000142">
    <property type="protein sequence ID" value="EEE64181.1"/>
    <property type="molecule type" value="Genomic_DNA"/>
</dbReference>
<dbReference type="RefSeq" id="XP_015638738.1">
    <property type="nucleotide sequence ID" value="XM_015783252.1"/>
</dbReference>
<dbReference type="SMR" id="Q6T367"/>
<dbReference type="FunCoup" id="Q6T367">
    <property type="interactions" value="245"/>
</dbReference>
<dbReference type="STRING" id="39947.Q6T367"/>
<dbReference type="PaxDb" id="39947-Q6T367"/>
<dbReference type="EnsemblPlants" id="Os05t0489800-01">
    <property type="protein sequence ID" value="Os05t0489800-01"/>
    <property type="gene ID" value="Os05g0489800"/>
</dbReference>
<dbReference type="Gramene" id="Os05t0489800-01">
    <property type="protein sequence ID" value="Os05t0489800-01"/>
    <property type="gene ID" value="Os05g0489800"/>
</dbReference>
<dbReference type="KEGG" id="dosa:Os05g0489800"/>
<dbReference type="eggNOG" id="KOG1745">
    <property type="taxonomic scope" value="Eukaryota"/>
</dbReference>
<dbReference type="HOGENOM" id="CLU_078295_3_0_1"/>
<dbReference type="InParanoid" id="Q6T367"/>
<dbReference type="OMA" id="EIRAYQS"/>
<dbReference type="OrthoDB" id="842664at2759"/>
<dbReference type="Proteomes" id="UP000000763">
    <property type="component" value="Chromosome 5"/>
</dbReference>
<dbReference type="Proteomes" id="UP000007752">
    <property type="component" value="Chromosome 5"/>
</dbReference>
<dbReference type="Proteomes" id="UP000059680">
    <property type="component" value="Chromosome 5"/>
</dbReference>
<dbReference type="GO" id="GO:0000776">
    <property type="term" value="C:kinetochore"/>
    <property type="evidence" value="ECO:0000314"/>
    <property type="project" value="UniProtKB"/>
</dbReference>
<dbReference type="GO" id="GO:0000786">
    <property type="term" value="C:nucleosome"/>
    <property type="evidence" value="ECO:0007669"/>
    <property type="project" value="UniProtKB-KW"/>
</dbReference>
<dbReference type="GO" id="GO:0005634">
    <property type="term" value="C:nucleus"/>
    <property type="evidence" value="ECO:0000318"/>
    <property type="project" value="GO_Central"/>
</dbReference>
<dbReference type="GO" id="GO:0003677">
    <property type="term" value="F:DNA binding"/>
    <property type="evidence" value="ECO:0007669"/>
    <property type="project" value="UniProtKB-KW"/>
</dbReference>
<dbReference type="GO" id="GO:0046982">
    <property type="term" value="F:protein heterodimerization activity"/>
    <property type="evidence" value="ECO:0007669"/>
    <property type="project" value="InterPro"/>
</dbReference>
<dbReference type="GO" id="GO:0030527">
    <property type="term" value="F:structural constituent of chromatin"/>
    <property type="evidence" value="ECO:0007669"/>
    <property type="project" value="InterPro"/>
</dbReference>
<dbReference type="GO" id="GO:0051382">
    <property type="term" value="P:kinetochore assembly"/>
    <property type="evidence" value="ECO:0000314"/>
    <property type="project" value="UniProtKB"/>
</dbReference>
<dbReference type="GO" id="GO:0051983">
    <property type="term" value="P:regulation of chromosome segregation"/>
    <property type="evidence" value="ECO:0000314"/>
    <property type="project" value="UniProtKB"/>
</dbReference>
<dbReference type="CDD" id="cd22911">
    <property type="entry name" value="HFD_H3"/>
    <property type="match status" value="1"/>
</dbReference>
<dbReference type="FunFam" id="1.10.20.10:FF:000106">
    <property type="entry name" value="Centromeric histone 3"/>
    <property type="match status" value="1"/>
</dbReference>
<dbReference type="Gene3D" id="1.10.20.10">
    <property type="entry name" value="Histone, subunit A"/>
    <property type="match status" value="1"/>
</dbReference>
<dbReference type="InterPro" id="IPR009072">
    <property type="entry name" value="Histone-fold"/>
</dbReference>
<dbReference type="InterPro" id="IPR007125">
    <property type="entry name" value="Histone_H2A/H2B/H3"/>
</dbReference>
<dbReference type="InterPro" id="IPR000164">
    <property type="entry name" value="Histone_H3/CENP-A"/>
</dbReference>
<dbReference type="PANTHER" id="PTHR11426">
    <property type="entry name" value="HISTONE H3"/>
    <property type="match status" value="1"/>
</dbReference>
<dbReference type="Pfam" id="PF00125">
    <property type="entry name" value="Histone"/>
    <property type="match status" value="1"/>
</dbReference>
<dbReference type="PRINTS" id="PR00622">
    <property type="entry name" value="HISTONEH3"/>
</dbReference>
<dbReference type="SMART" id="SM00428">
    <property type="entry name" value="H3"/>
    <property type="match status" value="1"/>
</dbReference>
<dbReference type="SUPFAM" id="SSF47113">
    <property type="entry name" value="Histone-fold"/>
    <property type="match status" value="1"/>
</dbReference>
<dbReference type="PROSITE" id="PS00959">
    <property type="entry name" value="HISTONE_H3_2"/>
    <property type="match status" value="1"/>
</dbReference>
<evidence type="ECO:0000250" key="1">
    <source>
        <dbReference type="UniProtKB" id="P59226"/>
    </source>
</evidence>
<evidence type="ECO:0000256" key="2">
    <source>
        <dbReference type="SAM" id="MobiDB-lite"/>
    </source>
</evidence>
<evidence type="ECO:0000269" key="3">
    <source>
    </source>
</evidence>
<evidence type="ECO:0000269" key="4">
    <source>
    </source>
</evidence>
<evidence type="ECO:0000303" key="5">
    <source>
    </source>
</evidence>
<evidence type="ECO:0000305" key="6"/>
<evidence type="ECO:0000305" key="7">
    <source>
    </source>
</evidence>
<evidence type="ECO:0000305" key="8">
    <source>
    </source>
</evidence>
<evidence type="ECO:0000312" key="9">
    <source>
        <dbReference type="EMBL" id="AAR85315.1"/>
    </source>
</evidence>
<evidence type="ECO:0000312" key="10">
    <source>
        <dbReference type="EMBL" id="AAT77291.1"/>
    </source>
</evidence>
<evidence type="ECO:0000312" key="11">
    <source>
        <dbReference type="EMBL" id="BAS94646.1"/>
    </source>
</evidence>
<evidence type="ECO:0000312" key="12">
    <source>
        <dbReference type="EMBL" id="EEE64181.1"/>
    </source>
</evidence>
<reference key="1">
    <citation type="journal article" date="2004" name="Nat. Genet.">
        <title>Sequencing of a rice centromere uncovers active genes.</title>
        <authorList>
            <person name="Nagaki K."/>
            <person name="Cheng Z."/>
            <person name="Ouyang S."/>
            <person name="Talbert P.B."/>
            <person name="Kim M."/>
            <person name="Jones K.M."/>
            <person name="Henikoff S."/>
            <person name="Buell C.R."/>
            <person name="Jiang J."/>
        </authorList>
    </citation>
    <scope>NUCLEOTIDE SEQUENCE [MRNA]</scope>
    <scope>FUNCTION</scope>
    <scope>SUBCELLULAR LOCATION</scope>
    <source>
        <tissue>Panicle</tissue>
    </source>
</reference>
<reference key="2">
    <citation type="journal article" date="2005" name="Mol. Genet. Genomics">
        <title>A fine physical map of the rice chromosome 5.</title>
        <authorList>
            <person name="Cheng C.-H."/>
            <person name="Chung M.C."/>
            <person name="Liu S.-M."/>
            <person name="Chen S.-K."/>
            <person name="Kao F.Y."/>
            <person name="Lin S.-J."/>
            <person name="Hsiao S.-H."/>
            <person name="Tseng I.C."/>
            <person name="Hsing Y.-I.C."/>
            <person name="Wu H.-P."/>
            <person name="Chen C.-S."/>
            <person name="Shaw J.-F."/>
            <person name="Wu J."/>
            <person name="Matsumoto T."/>
            <person name="Sasaki T."/>
            <person name="Chen H.-C."/>
            <person name="Chow T.-Y."/>
        </authorList>
    </citation>
    <scope>NUCLEOTIDE SEQUENCE [LARGE SCALE GENOMIC DNA]</scope>
    <source>
        <strain>cv. Nipponbare</strain>
    </source>
</reference>
<reference key="3">
    <citation type="journal article" date="2005" name="Nature">
        <title>The map-based sequence of the rice genome.</title>
        <authorList>
            <consortium name="International rice genome sequencing project (IRGSP)"/>
        </authorList>
    </citation>
    <scope>NUCLEOTIDE SEQUENCE [LARGE SCALE GENOMIC DNA]</scope>
    <source>
        <strain>cv. Nipponbare</strain>
    </source>
</reference>
<reference key="4">
    <citation type="journal article" date="2008" name="Nucleic Acids Res.">
        <title>The rice annotation project database (RAP-DB): 2008 update.</title>
        <authorList>
            <consortium name="The rice annotation project (RAP)"/>
        </authorList>
    </citation>
    <scope>GENOME REANNOTATION</scope>
    <source>
        <strain>cv. Nipponbare</strain>
    </source>
</reference>
<reference key="5">
    <citation type="journal article" date="2013" name="Rice">
        <title>Improvement of the Oryza sativa Nipponbare reference genome using next generation sequence and optical map data.</title>
        <authorList>
            <person name="Kawahara Y."/>
            <person name="de la Bastide M."/>
            <person name="Hamilton J.P."/>
            <person name="Kanamori H."/>
            <person name="McCombie W.R."/>
            <person name="Ouyang S."/>
            <person name="Schwartz D.C."/>
            <person name="Tanaka T."/>
            <person name="Wu J."/>
            <person name="Zhou S."/>
            <person name="Childs K.L."/>
            <person name="Davidson R.M."/>
            <person name="Lin H."/>
            <person name="Quesada-Ocampo L."/>
            <person name="Vaillancourt B."/>
            <person name="Sakai H."/>
            <person name="Lee S.S."/>
            <person name="Kim J."/>
            <person name="Numa H."/>
            <person name="Itoh T."/>
            <person name="Buell C.R."/>
            <person name="Matsumoto T."/>
        </authorList>
    </citation>
    <scope>GENOME REANNOTATION</scope>
    <source>
        <strain>cv. Nipponbare</strain>
    </source>
</reference>
<reference key="6">
    <citation type="journal article" date="2005" name="PLoS Biol.">
        <title>The genomes of Oryza sativa: a history of duplications.</title>
        <authorList>
            <person name="Yu J."/>
            <person name="Wang J."/>
            <person name="Lin W."/>
            <person name="Li S."/>
            <person name="Li H."/>
            <person name="Zhou J."/>
            <person name="Ni P."/>
            <person name="Dong W."/>
            <person name="Hu S."/>
            <person name="Zeng C."/>
            <person name="Zhang J."/>
            <person name="Zhang Y."/>
            <person name="Li R."/>
            <person name="Xu Z."/>
            <person name="Li S."/>
            <person name="Li X."/>
            <person name="Zheng H."/>
            <person name="Cong L."/>
            <person name="Lin L."/>
            <person name="Yin J."/>
            <person name="Geng J."/>
            <person name="Li G."/>
            <person name="Shi J."/>
            <person name="Liu J."/>
            <person name="Lv H."/>
            <person name="Li J."/>
            <person name="Wang J."/>
            <person name="Deng Y."/>
            <person name="Ran L."/>
            <person name="Shi X."/>
            <person name="Wang X."/>
            <person name="Wu Q."/>
            <person name="Li C."/>
            <person name="Ren X."/>
            <person name="Wang J."/>
            <person name="Wang X."/>
            <person name="Li D."/>
            <person name="Liu D."/>
            <person name="Zhang X."/>
            <person name="Ji Z."/>
            <person name="Zhao W."/>
            <person name="Sun Y."/>
            <person name="Zhang Z."/>
            <person name="Bao J."/>
            <person name="Han Y."/>
            <person name="Dong L."/>
            <person name="Ji J."/>
            <person name="Chen P."/>
            <person name="Wu S."/>
            <person name="Liu J."/>
            <person name="Xiao Y."/>
            <person name="Bu D."/>
            <person name="Tan J."/>
            <person name="Yang L."/>
            <person name="Ye C."/>
            <person name="Zhang J."/>
            <person name="Xu J."/>
            <person name="Zhou Y."/>
            <person name="Yu Y."/>
            <person name="Zhang B."/>
            <person name="Zhuang S."/>
            <person name="Wei H."/>
            <person name="Liu B."/>
            <person name="Lei M."/>
            <person name="Yu H."/>
            <person name="Li Y."/>
            <person name="Xu H."/>
            <person name="Wei S."/>
            <person name="He X."/>
            <person name="Fang L."/>
            <person name="Zhang Z."/>
            <person name="Zhang Y."/>
            <person name="Huang X."/>
            <person name="Su Z."/>
            <person name="Tong W."/>
            <person name="Li J."/>
            <person name="Tong Z."/>
            <person name="Li S."/>
            <person name="Ye J."/>
            <person name="Wang L."/>
            <person name="Fang L."/>
            <person name="Lei T."/>
            <person name="Chen C.-S."/>
            <person name="Chen H.-C."/>
            <person name="Xu Z."/>
            <person name="Li H."/>
            <person name="Huang H."/>
            <person name="Zhang F."/>
            <person name="Xu H."/>
            <person name="Li N."/>
            <person name="Zhao C."/>
            <person name="Li S."/>
            <person name="Dong L."/>
            <person name="Huang Y."/>
            <person name="Li L."/>
            <person name="Xi Y."/>
            <person name="Qi Q."/>
            <person name="Li W."/>
            <person name="Zhang B."/>
            <person name="Hu W."/>
            <person name="Zhang Y."/>
            <person name="Tian X."/>
            <person name="Jiao Y."/>
            <person name="Liang X."/>
            <person name="Jin J."/>
            <person name="Gao L."/>
            <person name="Zheng W."/>
            <person name="Hao B."/>
            <person name="Liu S.-M."/>
            <person name="Wang W."/>
            <person name="Yuan L."/>
            <person name="Cao M."/>
            <person name="McDermott J."/>
            <person name="Samudrala R."/>
            <person name="Wang J."/>
            <person name="Wong G.K.-S."/>
            <person name="Yang H."/>
        </authorList>
    </citation>
    <scope>NUCLEOTIDE SEQUENCE [LARGE SCALE GENOMIC DNA]</scope>
    <source>
        <strain>cv. Nipponbare</strain>
    </source>
</reference>
<reference key="7">
    <citation type="journal article" date="2006" name="Plant Cell">
        <title>Genomic and genetic characterization of rice Cen3 reveals extensive transcription and evolutionary implications of a complex centromere.</title>
        <authorList>
            <person name="Yan H."/>
            <person name="Ito H."/>
            <person name="Nobuta K."/>
            <person name="Ouyang S."/>
            <person name="Jin W."/>
            <person name="Tian S."/>
            <person name="Lu C."/>
            <person name="Venu R.C."/>
            <person name="Wang G.L."/>
            <person name="Green P.J."/>
            <person name="Wing R.A."/>
            <person name="Buell C.R."/>
            <person name="Meyers B.C."/>
            <person name="Jiang J."/>
        </authorList>
    </citation>
    <scope>FUNCTION</scope>
    <scope>SUBCELLULAR LOCATION</scope>
</reference>
<organism evidence="9">
    <name type="scientific">Oryza sativa subsp. japonica</name>
    <name type="common">Rice</name>
    <dbReference type="NCBI Taxonomy" id="39947"/>
    <lineage>
        <taxon>Eukaryota</taxon>
        <taxon>Viridiplantae</taxon>
        <taxon>Streptophyta</taxon>
        <taxon>Embryophyta</taxon>
        <taxon>Tracheophyta</taxon>
        <taxon>Spermatophyta</taxon>
        <taxon>Magnoliopsida</taxon>
        <taxon>Liliopsida</taxon>
        <taxon>Poales</taxon>
        <taxon>Poaceae</taxon>
        <taxon>BOP clade</taxon>
        <taxon>Oryzoideae</taxon>
        <taxon>Oryzeae</taxon>
        <taxon>Oryzinae</taxon>
        <taxon>Oryza</taxon>
        <taxon>Oryza sativa</taxon>
    </lineage>
</organism>
<accession>Q6T367</accession>
<accession>B9FKV9</accession>
<accession>Q6AVM4</accession>
<keyword id="KW-0007">Acetylation</keyword>
<keyword id="KW-0137">Centromere</keyword>
<keyword id="KW-0158">Chromosome</keyword>
<keyword id="KW-0238">DNA-binding</keyword>
<keyword id="KW-0995">Kinetochore</keyword>
<keyword id="KW-0488">Methylation</keyword>
<keyword id="KW-0544">Nucleosome core</keyword>
<keyword id="KW-1185">Reference proteome</keyword>
<sequence>MARTKHPAVRKSKAEPKKKLQFERSPRPSKAQRAGGGTGTSATTRSAAGTSASGTPRQQTKQRKPHRFRPGTVALREIRKFQKTTELLIPFAPFSRLVREITDFYSKDVSRWTLEALLALQEAAEYHLVDIFEVSNLCAIHAKRVTIMQKDMQLARRIGGRRPW</sequence>
<feature type="chain" id="PRO_0000455447" description="Histone H3-like centromeric protein CENH3">
    <location>
        <begin position="1"/>
        <end position="164"/>
    </location>
</feature>
<feature type="region of interest" description="Disordered" evidence="2">
    <location>
        <begin position="1"/>
        <end position="71"/>
    </location>
</feature>
<feature type="compositionally biased region" description="Basic residues" evidence="2">
    <location>
        <begin position="1"/>
        <end position="11"/>
    </location>
</feature>
<feature type="compositionally biased region" description="Basic and acidic residues" evidence="2">
    <location>
        <begin position="12"/>
        <end position="26"/>
    </location>
</feature>
<feature type="compositionally biased region" description="Low complexity" evidence="2">
    <location>
        <begin position="40"/>
        <end position="55"/>
    </location>
</feature>
<feature type="compositionally biased region" description="Basic residues" evidence="2">
    <location>
        <begin position="60"/>
        <end position="69"/>
    </location>
</feature>
<feature type="modified residue" description="N6,N6,N6-trimethyllysine; alternate" evidence="1">
    <location>
        <position position="5"/>
    </location>
</feature>
<feature type="modified residue" description="N6,N6-dimethyllysine; alternate" evidence="1">
    <location>
        <position position="5"/>
    </location>
</feature>
<feature type="modified residue" description="N6-methyllysine; alternate" evidence="1">
    <location>
        <position position="5"/>
    </location>
</feature>
<feature type="modified residue" description="N6-acetyllysine; alternate" evidence="1">
    <location>
        <position position="19"/>
    </location>
</feature>
<feature type="modified residue" description="N6-methyllysine; alternate" evidence="1">
    <location>
        <position position="19"/>
    </location>
</feature>
<feature type="modified residue" description="N6,N6,N6-trimethyllysine; alternate" evidence="1">
    <location>
        <position position="30"/>
    </location>
</feature>
<feature type="modified residue" description="N6,N6-dimethyllysine; alternate" evidence="1">
    <location>
        <position position="30"/>
    </location>
</feature>
<feature type="modified residue" description="N6-methyllysine; alternate" evidence="1">
    <location>
        <position position="30"/>
    </location>
</feature>